<comment type="function">
    <text evidence="1">Catalyzes the acyloin condensation reaction between C atoms 2 and 3 of pyruvate and glyceraldehyde 3-phosphate to yield 1-deoxy-D-xylulose-5-phosphate (DXP).</text>
</comment>
<comment type="catalytic activity">
    <reaction evidence="1">
        <text>D-glyceraldehyde 3-phosphate + pyruvate + H(+) = 1-deoxy-D-xylulose 5-phosphate + CO2</text>
        <dbReference type="Rhea" id="RHEA:12605"/>
        <dbReference type="ChEBI" id="CHEBI:15361"/>
        <dbReference type="ChEBI" id="CHEBI:15378"/>
        <dbReference type="ChEBI" id="CHEBI:16526"/>
        <dbReference type="ChEBI" id="CHEBI:57792"/>
        <dbReference type="ChEBI" id="CHEBI:59776"/>
        <dbReference type="EC" id="2.2.1.7"/>
    </reaction>
</comment>
<comment type="cofactor">
    <cofactor evidence="1">
        <name>Mg(2+)</name>
        <dbReference type="ChEBI" id="CHEBI:18420"/>
    </cofactor>
    <text evidence="1">Binds 1 Mg(2+) ion per subunit.</text>
</comment>
<comment type="cofactor">
    <cofactor evidence="1">
        <name>thiamine diphosphate</name>
        <dbReference type="ChEBI" id="CHEBI:58937"/>
    </cofactor>
    <text evidence="1">Binds 1 thiamine pyrophosphate per subunit.</text>
</comment>
<comment type="pathway">
    <text evidence="1">Metabolic intermediate biosynthesis; 1-deoxy-D-xylulose 5-phosphate biosynthesis; 1-deoxy-D-xylulose 5-phosphate from D-glyceraldehyde 3-phosphate and pyruvate: step 1/1.</text>
</comment>
<comment type="subunit">
    <text evidence="1">Homodimer.</text>
</comment>
<comment type="similarity">
    <text evidence="1">Belongs to the transketolase family. DXPS subfamily.</text>
</comment>
<accession>Q1RFC0</accession>
<organism>
    <name type="scientific">Escherichia coli (strain UTI89 / UPEC)</name>
    <dbReference type="NCBI Taxonomy" id="364106"/>
    <lineage>
        <taxon>Bacteria</taxon>
        <taxon>Pseudomonadati</taxon>
        <taxon>Pseudomonadota</taxon>
        <taxon>Gammaproteobacteria</taxon>
        <taxon>Enterobacterales</taxon>
        <taxon>Enterobacteriaceae</taxon>
        <taxon>Escherichia</taxon>
    </lineage>
</organism>
<dbReference type="EC" id="2.2.1.7" evidence="1"/>
<dbReference type="EMBL" id="CP000243">
    <property type="protein sequence ID" value="ABE05944.1"/>
    <property type="molecule type" value="Genomic_DNA"/>
</dbReference>
<dbReference type="RefSeq" id="WP_000006815.1">
    <property type="nucleotide sequence ID" value="NZ_CP064825.1"/>
</dbReference>
<dbReference type="SMR" id="Q1RFC0"/>
<dbReference type="KEGG" id="eci:UTI89_C0443"/>
<dbReference type="HOGENOM" id="CLU_009227_1_4_6"/>
<dbReference type="UniPathway" id="UPA00064">
    <property type="reaction ID" value="UER00091"/>
</dbReference>
<dbReference type="Proteomes" id="UP000001952">
    <property type="component" value="Chromosome"/>
</dbReference>
<dbReference type="GO" id="GO:0005829">
    <property type="term" value="C:cytosol"/>
    <property type="evidence" value="ECO:0007669"/>
    <property type="project" value="TreeGrafter"/>
</dbReference>
<dbReference type="GO" id="GO:0008661">
    <property type="term" value="F:1-deoxy-D-xylulose-5-phosphate synthase activity"/>
    <property type="evidence" value="ECO:0007669"/>
    <property type="project" value="UniProtKB-UniRule"/>
</dbReference>
<dbReference type="GO" id="GO:0000287">
    <property type="term" value="F:magnesium ion binding"/>
    <property type="evidence" value="ECO:0007669"/>
    <property type="project" value="UniProtKB-UniRule"/>
</dbReference>
<dbReference type="GO" id="GO:0030976">
    <property type="term" value="F:thiamine pyrophosphate binding"/>
    <property type="evidence" value="ECO:0007669"/>
    <property type="project" value="UniProtKB-UniRule"/>
</dbReference>
<dbReference type="GO" id="GO:0052865">
    <property type="term" value="P:1-deoxy-D-xylulose 5-phosphate biosynthetic process"/>
    <property type="evidence" value="ECO:0007669"/>
    <property type="project" value="UniProtKB-UniPathway"/>
</dbReference>
<dbReference type="GO" id="GO:0019288">
    <property type="term" value="P:isopentenyl diphosphate biosynthetic process, methylerythritol 4-phosphate pathway"/>
    <property type="evidence" value="ECO:0007669"/>
    <property type="project" value="TreeGrafter"/>
</dbReference>
<dbReference type="GO" id="GO:0016114">
    <property type="term" value="P:terpenoid biosynthetic process"/>
    <property type="evidence" value="ECO:0007669"/>
    <property type="project" value="UniProtKB-UniRule"/>
</dbReference>
<dbReference type="GO" id="GO:0009228">
    <property type="term" value="P:thiamine biosynthetic process"/>
    <property type="evidence" value="ECO:0007669"/>
    <property type="project" value="UniProtKB-UniRule"/>
</dbReference>
<dbReference type="CDD" id="cd02007">
    <property type="entry name" value="TPP_DXS"/>
    <property type="match status" value="1"/>
</dbReference>
<dbReference type="CDD" id="cd07033">
    <property type="entry name" value="TPP_PYR_DXS_TK_like"/>
    <property type="match status" value="1"/>
</dbReference>
<dbReference type="FunFam" id="3.40.50.920:FF:000002">
    <property type="entry name" value="1-deoxy-D-xylulose-5-phosphate synthase"/>
    <property type="match status" value="1"/>
</dbReference>
<dbReference type="FunFam" id="3.40.50.970:FF:000005">
    <property type="entry name" value="1-deoxy-D-xylulose-5-phosphate synthase"/>
    <property type="match status" value="1"/>
</dbReference>
<dbReference type="Gene3D" id="3.40.50.920">
    <property type="match status" value="1"/>
</dbReference>
<dbReference type="Gene3D" id="3.40.50.970">
    <property type="match status" value="2"/>
</dbReference>
<dbReference type="HAMAP" id="MF_00315">
    <property type="entry name" value="DXP_synth"/>
    <property type="match status" value="1"/>
</dbReference>
<dbReference type="InterPro" id="IPR005477">
    <property type="entry name" value="Dxylulose-5-P_synthase"/>
</dbReference>
<dbReference type="InterPro" id="IPR029061">
    <property type="entry name" value="THDP-binding"/>
</dbReference>
<dbReference type="InterPro" id="IPR009014">
    <property type="entry name" value="Transketo_C/PFOR_II"/>
</dbReference>
<dbReference type="InterPro" id="IPR005475">
    <property type="entry name" value="Transketolase-like_Pyr-bd"/>
</dbReference>
<dbReference type="InterPro" id="IPR020826">
    <property type="entry name" value="Transketolase_BS"/>
</dbReference>
<dbReference type="InterPro" id="IPR033248">
    <property type="entry name" value="Transketolase_C"/>
</dbReference>
<dbReference type="InterPro" id="IPR049557">
    <property type="entry name" value="Transketolase_CS"/>
</dbReference>
<dbReference type="NCBIfam" id="TIGR00204">
    <property type="entry name" value="dxs"/>
    <property type="match status" value="1"/>
</dbReference>
<dbReference type="NCBIfam" id="NF003933">
    <property type="entry name" value="PRK05444.2-2"/>
    <property type="match status" value="1"/>
</dbReference>
<dbReference type="PANTHER" id="PTHR43322">
    <property type="entry name" value="1-D-DEOXYXYLULOSE 5-PHOSPHATE SYNTHASE-RELATED"/>
    <property type="match status" value="1"/>
</dbReference>
<dbReference type="PANTHER" id="PTHR43322:SF5">
    <property type="entry name" value="1-DEOXY-D-XYLULOSE-5-PHOSPHATE SYNTHASE, CHLOROPLASTIC"/>
    <property type="match status" value="1"/>
</dbReference>
<dbReference type="Pfam" id="PF13292">
    <property type="entry name" value="DXP_synthase_N"/>
    <property type="match status" value="1"/>
</dbReference>
<dbReference type="Pfam" id="PF02779">
    <property type="entry name" value="Transket_pyr"/>
    <property type="match status" value="1"/>
</dbReference>
<dbReference type="Pfam" id="PF02780">
    <property type="entry name" value="Transketolase_C"/>
    <property type="match status" value="1"/>
</dbReference>
<dbReference type="SMART" id="SM00861">
    <property type="entry name" value="Transket_pyr"/>
    <property type="match status" value="1"/>
</dbReference>
<dbReference type="SUPFAM" id="SSF52518">
    <property type="entry name" value="Thiamin diphosphate-binding fold (THDP-binding)"/>
    <property type="match status" value="2"/>
</dbReference>
<dbReference type="SUPFAM" id="SSF52922">
    <property type="entry name" value="TK C-terminal domain-like"/>
    <property type="match status" value="1"/>
</dbReference>
<dbReference type="PROSITE" id="PS00801">
    <property type="entry name" value="TRANSKETOLASE_1"/>
    <property type="match status" value="1"/>
</dbReference>
<dbReference type="PROSITE" id="PS00802">
    <property type="entry name" value="TRANSKETOLASE_2"/>
    <property type="match status" value="1"/>
</dbReference>
<evidence type="ECO:0000255" key="1">
    <source>
        <dbReference type="HAMAP-Rule" id="MF_00315"/>
    </source>
</evidence>
<gene>
    <name evidence="1" type="primary">dxs</name>
    <name type="ordered locus">UTI89_C0443</name>
</gene>
<name>DXS_ECOUT</name>
<keyword id="KW-0414">Isoprene biosynthesis</keyword>
<keyword id="KW-0460">Magnesium</keyword>
<keyword id="KW-0479">Metal-binding</keyword>
<keyword id="KW-0784">Thiamine biosynthesis</keyword>
<keyword id="KW-0786">Thiamine pyrophosphate</keyword>
<keyword id="KW-0808">Transferase</keyword>
<protein>
    <recommendedName>
        <fullName evidence="1">1-deoxy-D-xylulose-5-phosphate synthase</fullName>
        <ecNumber evidence="1">2.2.1.7</ecNumber>
    </recommendedName>
    <alternativeName>
        <fullName evidence="1">1-deoxyxylulose-5-phosphate synthase</fullName>
        <shortName evidence="1">DXP synthase</shortName>
        <shortName evidence="1">DXPS</shortName>
    </alternativeName>
</protein>
<sequence>MSFDIAKYPTLALVDSTQELRLLPKESLPKLCDELRRYLLDSVSRSSGHFASGLGTVELTVALHYVYNTPFDQLIWDVGHQAYPHKILTGRRDKIGTIRQKGGLHPFPWRGESEYDVLSVGHSSTSISAGIGIAVAAEKEGKNRRTVCVIGDGAITAGMAFEAMNHAGDIRPDMLVVLNDNEMSISENVGALNNHLAQLLSGKLYSSLREGGKKVFSGVPPIKELLKRTEEHIKGMVVPGTLFEELGFNYIGPVDGHDVLGLITTLKNMRDLKGPQFLHIMTKKGRGYEPAEKDPITFHAVPKFDPSSGCLPKSSGGLPSYSKIFGDWLCETAAKDNKLMAITPAMREGSGMVEFSRKFPDRYFDVAIAEQHAVTFAAGLAIGGYKPIVAIYSTFLQRAYDQVLHDVAIQKLPVLFAIDRAGIVGADGQTHQGAFDLSYLRCIPEMVIMTPSDENECRQMLYTGYHYNDGPSAVRYPRGNAVGVELTPLEKLPIGKGIVKRRGEKLAILNFGTLMPEAAKVAESLNATLVDMRFVKPLDEALILEMAASHEALVTVEENAIMGGAGSGVNEVLMAHRKPVPVLNIGLPDFFIPQGTQEEMRAELGLDAAGMEAKIKAWLA</sequence>
<reference key="1">
    <citation type="journal article" date="2006" name="Proc. Natl. Acad. Sci. U.S.A.">
        <title>Identification of genes subject to positive selection in uropathogenic strains of Escherichia coli: a comparative genomics approach.</title>
        <authorList>
            <person name="Chen S.L."/>
            <person name="Hung C.-S."/>
            <person name="Xu J."/>
            <person name="Reigstad C.S."/>
            <person name="Magrini V."/>
            <person name="Sabo A."/>
            <person name="Blasiar D."/>
            <person name="Bieri T."/>
            <person name="Meyer R.R."/>
            <person name="Ozersky P."/>
            <person name="Armstrong J.R."/>
            <person name="Fulton R.S."/>
            <person name="Latreille J.P."/>
            <person name="Spieth J."/>
            <person name="Hooton T.M."/>
            <person name="Mardis E.R."/>
            <person name="Hultgren S.J."/>
            <person name="Gordon J.I."/>
        </authorList>
    </citation>
    <scope>NUCLEOTIDE SEQUENCE [LARGE SCALE GENOMIC DNA]</scope>
    <source>
        <strain>UTI89 / UPEC</strain>
    </source>
</reference>
<feature type="chain" id="PRO_0000256416" description="1-deoxy-D-xylulose-5-phosphate synthase">
    <location>
        <begin position="1"/>
        <end position="620"/>
    </location>
</feature>
<feature type="binding site" evidence="1">
    <location>
        <position position="80"/>
    </location>
    <ligand>
        <name>thiamine diphosphate</name>
        <dbReference type="ChEBI" id="CHEBI:58937"/>
    </ligand>
</feature>
<feature type="binding site" evidence="1">
    <location>
        <begin position="121"/>
        <end position="123"/>
    </location>
    <ligand>
        <name>thiamine diphosphate</name>
        <dbReference type="ChEBI" id="CHEBI:58937"/>
    </ligand>
</feature>
<feature type="binding site" evidence="1">
    <location>
        <position position="152"/>
    </location>
    <ligand>
        <name>Mg(2+)</name>
        <dbReference type="ChEBI" id="CHEBI:18420"/>
    </ligand>
</feature>
<feature type="binding site" evidence="1">
    <location>
        <begin position="153"/>
        <end position="154"/>
    </location>
    <ligand>
        <name>thiamine diphosphate</name>
        <dbReference type="ChEBI" id="CHEBI:58937"/>
    </ligand>
</feature>
<feature type="binding site" evidence="1">
    <location>
        <position position="181"/>
    </location>
    <ligand>
        <name>Mg(2+)</name>
        <dbReference type="ChEBI" id="CHEBI:18420"/>
    </ligand>
</feature>
<feature type="binding site" evidence="1">
    <location>
        <position position="181"/>
    </location>
    <ligand>
        <name>thiamine diphosphate</name>
        <dbReference type="ChEBI" id="CHEBI:58937"/>
    </ligand>
</feature>
<feature type="binding site" evidence="1">
    <location>
        <position position="288"/>
    </location>
    <ligand>
        <name>thiamine diphosphate</name>
        <dbReference type="ChEBI" id="CHEBI:58937"/>
    </ligand>
</feature>
<feature type="binding site" evidence="1">
    <location>
        <position position="370"/>
    </location>
    <ligand>
        <name>thiamine diphosphate</name>
        <dbReference type="ChEBI" id="CHEBI:58937"/>
    </ligand>
</feature>
<proteinExistence type="inferred from homology"/>